<gene>
    <name evidence="2" type="primary">trmB</name>
    <name type="ordered locus">Tcr_0119</name>
</gene>
<protein>
    <recommendedName>
        <fullName evidence="2">tRNA (guanine-N(7)-)-methyltransferase</fullName>
        <ecNumber evidence="2">2.1.1.33</ecNumber>
    </recommendedName>
    <alternativeName>
        <fullName evidence="2">tRNA (guanine(46)-N(7))-methyltransferase</fullName>
    </alternativeName>
    <alternativeName>
        <fullName evidence="2">tRNA(m7G46)-methyltransferase</fullName>
    </alternativeName>
</protein>
<proteinExistence type="inferred from homology"/>
<organism>
    <name type="scientific">Hydrogenovibrio crunogenus (strain DSM 25203 / XCL-2)</name>
    <name type="common">Thiomicrospira crunogena</name>
    <dbReference type="NCBI Taxonomy" id="317025"/>
    <lineage>
        <taxon>Bacteria</taxon>
        <taxon>Pseudomonadati</taxon>
        <taxon>Pseudomonadota</taxon>
        <taxon>Gammaproteobacteria</taxon>
        <taxon>Thiotrichales</taxon>
        <taxon>Piscirickettsiaceae</taxon>
        <taxon>Hydrogenovibrio</taxon>
    </lineage>
</organism>
<evidence type="ECO:0000250" key="1"/>
<evidence type="ECO:0000255" key="2">
    <source>
        <dbReference type="HAMAP-Rule" id="MF_01057"/>
    </source>
</evidence>
<accession>Q31JF8</accession>
<feature type="chain" id="PRO_0000229207" description="tRNA (guanine-N(7)-)-methyltransferase">
    <location>
        <begin position="1"/>
        <end position="240"/>
    </location>
</feature>
<feature type="active site" evidence="1">
    <location>
        <position position="146"/>
    </location>
</feature>
<feature type="binding site" evidence="2">
    <location>
        <position position="71"/>
    </location>
    <ligand>
        <name>S-adenosyl-L-methionine</name>
        <dbReference type="ChEBI" id="CHEBI:59789"/>
    </ligand>
</feature>
<feature type="binding site" evidence="2">
    <location>
        <position position="96"/>
    </location>
    <ligand>
        <name>S-adenosyl-L-methionine</name>
        <dbReference type="ChEBI" id="CHEBI:59789"/>
    </ligand>
</feature>
<feature type="binding site" evidence="2">
    <location>
        <position position="123"/>
    </location>
    <ligand>
        <name>S-adenosyl-L-methionine</name>
        <dbReference type="ChEBI" id="CHEBI:59789"/>
    </ligand>
</feature>
<feature type="binding site" evidence="2">
    <location>
        <position position="146"/>
    </location>
    <ligand>
        <name>S-adenosyl-L-methionine</name>
        <dbReference type="ChEBI" id="CHEBI:59789"/>
    </ligand>
</feature>
<feature type="binding site" evidence="2">
    <location>
        <position position="150"/>
    </location>
    <ligand>
        <name>substrate</name>
    </ligand>
</feature>
<feature type="binding site" evidence="2">
    <location>
        <position position="182"/>
    </location>
    <ligand>
        <name>substrate</name>
    </ligand>
</feature>
<feature type="binding site" evidence="2">
    <location>
        <begin position="219"/>
        <end position="222"/>
    </location>
    <ligand>
        <name>substrate</name>
    </ligand>
</feature>
<keyword id="KW-0489">Methyltransferase</keyword>
<keyword id="KW-0949">S-adenosyl-L-methionine</keyword>
<keyword id="KW-0808">Transferase</keyword>
<keyword id="KW-0819">tRNA processing</keyword>
<dbReference type="EC" id="2.1.1.33" evidence="2"/>
<dbReference type="EMBL" id="CP000109">
    <property type="protein sequence ID" value="ABB40715.1"/>
    <property type="molecule type" value="Genomic_DNA"/>
</dbReference>
<dbReference type="SMR" id="Q31JF8"/>
<dbReference type="STRING" id="317025.Tcr_0119"/>
<dbReference type="KEGG" id="tcx:Tcr_0119"/>
<dbReference type="eggNOG" id="COG0220">
    <property type="taxonomic scope" value="Bacteria"/>
</dbReference>
<dbReference type="HOGENOM" id="CLU_050910_0_1_6"/>
<dbReference type="OrthoDB" id="9802090at2"/>
<dbReference type="UniPathway" id="UPA00989"/>
<dbReference type="GO" id="GO:0043527">
    <property type="term" value="C:tRNA methyltransferase complex"/>
    <property type="evidence" value="ECO:0007669"/>
    <property type="project" value="TreeGrafter"/>
</dbReference>
<dbReference type="GO" id="GO:0008176">
    <property type="term" value="F:tRNA (guanine(46)-N7)-methyltransferase activity"/>
    <property type="evidence" value="ECO:0007669"/>
    <property type="project" value="UniProtKB-UniRule"/>
</dbReference>
<dbReference type="CDD" id="cd02440">
    <property type="entry name" value="AdoMet_MTases"/>
    <property type="match status" value="1"/>
</dbReference>
<dbReference type="FunFam" id="3.40.50.150:FF:000035">
    <property type="entry name" value="tRNA (guanine-N(7)-)-methyltransferase"/>
    <property type="match status" value="1"/>
</dbReference>
<dbReference type="Gene3D" id="3.40.50.150">
    <property type="entry name" value="Vaccinia Virus protein VP39"/>
    <property type="match status" value="1"/>
</dbReference>
<dbReference type="HAMAP" id="MF_01057">
    <property type="entry name" value="tRNA_methyltr_TrmB"/>
    <property type="match status" value="1"/>
</dbReference>
<dbReference type="InterPro" id="IPR029063">
    <property type="entry name" value="SAM-dependent_MTases_sf"/>
</dbReference>
<dbReference type="InterPro" id="IPR003358">
    <property type="entry name" value="tRNA_(Gua-N-7)_MeTrfase_Trmb"/>
</dbReference>
<dbReference type="InterPro" id="IPR055361">
    <property type="entry name" value="tRNA_methyltr_TrmB_bact"/>
</dbReference>
<dbReference type="NCBIfam" id="TIGR00091">
    <property type="entry name" value="tRNA (guanosine(46)-N7)-methyltransferase TrmB"/>
    <property type="match status" value="1"/>
</dbReference>
<dbReference type="PANTHER" id="PTHR23417">
    <property type="entry name" value="3-DEOXY-D-MANNO-OCTULOSONIC-ACID TRANSFERASE/TRNA GUANINE-N 7 - -METHYLTRANSFERASE"/>
    <property type="match status" value="1"/>
</dbReference>
<dbReference type="PANTHER" id="PTHR23417:SF14">
    <property type="entry name" value="PENTACOTRIPEPTIDE-REPEAT REGION OF PRORP DOMAIN-CONTAINING PROTEIN"/>
    <property type="match status" value="1"/>
</dbReference>
<dbReference type="Pfam" id="PF02390">
    <property type="entry name" value="Methyltransf_4"/>
    <property type="match status" value="1"/>
</dbReference>
<dbReference type="SUPFAM" id="SSF53335">
    <property type="entry name" value="S-adenosyl-L-methionine-dependent methyltransferases"/>
    <property type="match status" value="1"/>
</dbReference>
<dbReference type="PROSITE" id="PS51625">
    <property type="entry name" value="SAM_MT_TRMB"/>
    <property type="match status" value="1"/>
</dbReference>
<sequence>MTENTESPQSVATDIPEHKRRIKSFVLRQGRLSQAQQNAIDTMWPQYGLTLEDKLLDFNTLFGREAPTIIEIGFGMGNSLAAMAEAHPENNYIGIEVHRPGVGALLKLVAEKGLTNVRVFNEDAIEVLNRQIPKNSLSAVYLFFPDPWHKTKHKKRRILQAEFAEKIAQYLAPGGQFHMATDWEDYALHMMSVMSAAKGYRNISGEGQYTPRPDYRPLTKFEQRGHRLGHGVWDLVFERI</sequence>
<comment type="function">
    <text evidence="2">Catalyzes the formation of N(7)-methylguanine at position 46 (m7G46) in tRNA.</text>
</comment>
<comment type="catalytic activity">
    <reaction evidence="2">
        <text>guanosine(46) in tRNA + S-adenosyl-L-methionine = N(7)-methylguanosine(46) in tRNA + S-adenosyl-L-homocysteine</text>
        <dbReference type="Rhea" id="RHEA:42708"/>
        <dbReference type="Rhea" id="RHEA-COMP:10188"/>
        <dbReference type="Rhea" id="RHEA-COMP:10189"/>
        <dbReference type="ChEBI" id="CHEBI:57856"/>
        <dbReference type="ChEBI" id="CHEBI:59789"/>
        <dbReference type="ChEBI" id="CHEBI:74269"/>
        <dbReference type="ChEBI" id="CHEBI:74480"/>
        <dbReference type="EC" id="2.1.1.33"/>
    </reaction>
</comment>
<comment type="pathway">
    <text evidence="2">tRNA modification; N(7)-methylguanine-tRNA biosynthesis.</text>
</comment>
<comment type="similarity">
    <text evidence="2">Belongs to the class I-like SAM-binding methyltransferase superfamily. TrmB family.</text>
</comment>
<name>TRMB_HYDCU</name>
<reference key="1">
    <citation type="journal article" date="2006" name="PLoS Biol.">
        <title>The genome of deep-sea vent chemolithoautotroph Thiomicrospira crunogena XCL-2.</title>
        <authorList>
            <person name="Scott K.M."/>
            <person name="Sievert S.M."/>
            <person name="Abril F.N."/>
            <person name="Ball L.A."/>
            <person name="Barrett C.J."/>
            <person name="Blake R.A."/>
            <person name="Boller A.J."/>
            <person name="Chain P.S.G."/>
            <person name="Clark J.A."/>
            <person name="Davis C.R."/>
            <person name="Detter C."/>
            <person name="Do K.F."/>
            <person name="Dobrinski K.P."/>
            <person name="Faza B.I."/>
            <person name="Fitzpatrick K.A."/>
            <person name="Freyermuth S.K."/>
            <person name="Harmer T.L."/>
            <person name="Hauser L.J."/>
            <person name="Huegler M."/>
            <person name="Kerfeld C.A."/>
            <person name="Klotz M.G."/>
            <person name="Kong W.W."/>
            <person name="Land M."/>
            <person name="Lapidus A."/>
            <person name="Larimer F.W."/>
            <person name="Longo D.L."/>
            <person name="Lucas S."/>
            <person name="Malfatti S.A."/>
            <person name="Massey S.E."/>
            <person name="Martin D.D."/>
            <person name="McCuddin Z."/>
            <person name="Meyer F."/>
            <person name="Moore J.L."/>
            <person name="Ocampo L.H. Jr."/>
            <person name="Paul J.H."/>
            <person name="Paulsen I.T."/>
            <person name="Reep D.K."/>
            <person name="Ren Q."/>
            <person name="Ross R.L."/>
            <person name="Sato P.Y."/>
            <person name="Thomas P."/>
            <person name="Tinkham L.E."/>
            <person name="Zeruth G.T."/>
        </authorList>
    </citation>
    <scope>NUCLEOTIDE SEQUENCE [LARGE SCALE GENOMIC DNA]</scope>
    <source>
        <strain>DSM 25203 / XCL-2</strain>
    </source>
</reference>